<accession>P03432</accession>
<name>RDRP_I68A6</name>
<evidence type="ECO:0000255" key="1">
    <source>
        <dbReference type="HAMAP-Rule" id="MF_04065"/>
    </source>
</evidence>
<evidence type="ECO:0000256" key="2">
    <source>
        <dbReference type="SAM" id="MobiDB-lite"/>
    </source>
</evidence>
<evidence type="ECO:0007829" key="3">
    <source>
        <dbReference type="PDB" id="6QNW"/>
    </source>
</evidence>
<evidence type="ECO:0007829" key="4">
    <source>
        <dbReference type="PDB" id="6RR7"/>
    </source>
</evidence>
<proteinExistence type="evidence at protein level"/>
<gene>
    <name evidence="1" type="primary">PB1</name>
</gene>
<organismHost>
    <name type="scientific">Aves</name>
    <dbReference type="NCBI Taxonomy" id="8782"/>
</organismHost>
<organismHost>
    <name type="scientific">Cetacea</name>
    <name type="common">whales</name>
    <dbReference type="NCBI Taxonomy" id="9721"/>
</organismHost>
<organismHost>
    <name type="scientific">Homo sapiens</name>
    <name type="common">Human</name>
    <dbReference type="NCBI Taxonomy" id="9606"/>
</organismHost>
<organismHost>
    <name type="scientific">Phocidae</name>
    <name type="common">true seals</name>
    <dbReference type="NCBI Taxonomy" id="9709"/>
</organismHost>
<organismHost>
    <name type="scientific">Sus scrofa</name>
    <name type="common">Pig</name>
    <dbReference type="NCBI Taxonomy" id="9823"/>
</organismHost>
<comment type="function">
    <text evidence="1">RNA-dependent RNA polymerase which is responsible for replication and transcription of virus RNA segments. The transcription of viral mRNAs occurs by a unique mechanism called cap-snatching. 5' methylated caps of cellular mRNAs are cleaved after 10-13 nucleotides by PA. In turn, these short capped RNAs are used as primers by PB1 for transcription of viral mRNAs. During virus replication, PB1 initiates RNA synthesis and copy vRNA into complementary RNA (cRNA) which in turn serves as a template for the production of more vRNAs.</text>
</comment>
<comment type="catalytic activity">
    <reaction evidence="1">
        <text>RNA(n) + a ribonucleoside 5'-triphosphate = RNA(n+1) + diphosphate</text>
        <dbReference type="Rhea" id="RHEA:21248"/>
        <dbReference type="Rhea" id="RHEA-COMP:14527"/>
        <dbReference type="Rhea" id="RHEA-COMP:17342"/>
        <dbReference type="ChEBI" id="CHEBI:33019"/>
        <dbReference type="ChEBI" id="CHEBI:61557"/>
        <dbReference type="ChEBI" id="CHEBI:140395"/>
        <dbReference type="EC" id="2.7.7.48"/>
    </reaction>
</comment>
<comment type="subunit">
    <text evidence="1">Influenza RNA polymerase is composed of three subunits: PB1, PB2 and PA. Interacts (via N-terminus) with PA (via C-terminus). Interacts (via C-terminus) with PB2 (via N-terminus); this interaction is essential for transcription initiation.</text>
</comment>
<comment type="subcellular location">
    <subcellularLocation>
        <location evidence="1">Host nucleus</location>
    </subcellularLocation>
    <subcellularLocation>
        <location evidence="1">Host cytoplasm</location>
    </subcellularLocation>
</comment>
<comment type="PTM">
    <text evidence="1">Phosphorylated by host PRKCA.</text>
</comment>
<comment type="similarity">
    <text evidence="1">Belongs to the influenza viruses polymerase PB1 family.</text>
</comment>
<protein>
    <recommendedName>
        <fullName evidence="1">RNA-directed RNA polymerase catalytic subunit</fullName>
        <ecNumber evidence="1">2.7.7.48</ecNumber>
    </recommendedName>
    <alternativeName>
        <fullName evidence="1">Polymerase basic protein 1</fullName>
        <shortName evidence="1">PB1</shortName>
    </alternativeName>
    <alternativeName>
        <fullName evidence="1">RNA-directed RNA polymerase subunit P1</fullName>
    </alternativeName>
</protein>
<organism>
    <name type="scientific">Influenza A virus (strain A/Northern Territory/60/1968 H3N2)</name>
    <name type="common">Influenza A virus (strain NT60)</name>
    <name type="synonym">Influenza A virus (strain A/NT/60/1968 H3N2)</name>
    <dbReference type="NCBI Taxonomy" id="384505"/>
    <lineage>
        <taxon>Viruses</taxon>
        <taxon>Riboviria</taxon>
        <taxon>Orthornavirae</taxon>
        <taxon>Negarnaviricota</taxon>
        <taxon>Polyploviricotina</taxon>
        <taxon>Insthoviricetes</taxon>
        <taxon>Articulavirales</taxon>
        <taxon>Orthomyxoviridae</taxon>
        <taxon>Alphainfluenzavirus</taxon>
        <taxon>Alphainfluenzavirus influenzae</taxon>
        <taxon>Influenza A virus</taxon>
    </lineage>
</organism>
<dbReference type="EC" id="2.7.7.48" evidence="1"/>
<dbReference type="EMBL" id="J02138">
    <property type="protein sequence ID" value="AAA43579.1"/>
    <property type="molecule type" value="Genomic_RNA"/>
</dbReference>
<dbReference type="PIR" id="A93415">
    <property type="entry name" value="P1IV68"/>
</dbReference>
<dbReference type="PDB" id="6QNW">
    <property type="method" value="X-ray"/>
    <property type="resolution" value="3.31 A"/>
    <property type="chains" value="B/E/H/K=1-757"/>
</dbReference>
<dbReference type="PDB" id="6QPG">
    <property type="method" value="X-ray"/>
    <property type="resolution" value="3.34 A"/>
    <property type="chains" value="B/E/H/K=1-757"/>
</dbReference>
<dbReference type="PDB" id="6QX8">
    <property type="method" value="EM"/>
    <property type="resolution" value="4.07 A"/>
    <property type="chains" value="B/F=1-757"/>
</dbReference>
<dbReference type="PDB" id="6QXE">
    <property type="method" value="EM"/>
    <property type="resolution" value="4.15 A"/>
    <property type="chains" value="B/F=1-757"/>
</dbReference>
<dbReference type="PDB" id="6RR7">
    <property type="method" value="EM"/>
    <property type="resolution" value="3.01 A"/>
    <property type="chains" value="B=1-757"/>
</dbReference>
<dbReference type="PDBsum" id="6QNW"/>
<dbReference type="PDBsum" id="6QPG"/>
<dbReference type="PDBsum" id="6QX8"/>
<dbReference type="PDBsum" id="6QXE"/>
<dbReference type="PDBsum" id="6RR7"/>
<dbReference type="EMDB" id="EMD-4663"/>
<dbReference type="EMDB" id="EMD-4666"/>
<dbReference type="EMDB" id="EMD-4986"/>
<dbReference type="SMR" id="P03432"/>
<dbReference type="IntAct" id="P03432">
    <property type="interactions" value="2"/>
</dbReference>
<dbReference type="ABCD" id="P03432">
    <property type="antibodies" value="1 sequenced antibody"/>
</dbReference>
<dbReference type="GO" id="GO:0030430">
    <property type="term" value="C:host cell cytoplasm"/>
    <property type="evidence" value="ECO:0007669"/>
    <property type="project" value="UniProtKB-SubCell"/>
</dbReference>
<dbReference type="GO" id="GO:0042025">
    <property type="term" value="C:host cell nucleus"/>
    <property type="evidence" value="ECO:0007669"/>
    <property type="project" value="UniProtKB-SubCell"/>
</dbReference>
<dbReference type="GO" id="GO:0000166">
    <property type="term" value="F:nucleotide binding"/>
    <property type="evidence" value="ECO:0007669"/>
    <property type="project" value="UniProtKB-UniRule"/>
</dbReference>
<dbReference type="GO" id="GO:0003723">
    <property type="term" value="F:RNA binding"/>
    <property type="evidence" value="ECO:0007669"/>
    <property type="project" value="InterPro"/>
</dbReference>
<dbReference type="GO" id="GO:0003968">
    <property type="term" value="F:RNA-directed RNA polymerase activity"/>
    <property type="evidence" value="ECO:0007669"/>
    <property type="project" value="UniProtKB-UniRule"/>
</dbReference>
<dbReference type="GO" id="GO:0006351">
    <property type="term" value="P:DNA-templated transcription"/>
    <property type="evidence" value="ECO:0007669"/>
    <property type="project" value="UniProtKB-UniRule"/>
</dbReference>
<dbReference type="GO" id="GO:0039657">
    <property type="term" value="P:symbiont-mediated suppression of host gene expression"/>
    <property type="evidence" value="ECO:0007669"/>
    <property type="project" value="UniProtKB-KW"/>
</dbReference>
<dbReference type="GO" id="GO:0039523">
    <property type="term" value="P:symbiont-mediated suppression of host mRNA transcription via inhibition of RNA polymerase II activity"/>
    <property type="evidence" value="ECO:0007669"/>
    <property type="project" value="UniProtKB-UniRule"/>
</dbReference>
<dbReference type="GO" id="GO:0039694">
    <property type="term" value="P:viral RNA genome replication"/>
    <property type="evidence" value="ECO:0007669"/>
    <property type="project" value="UniProtKB-UniRule"/>
</dbReference>
<dbReference type="GO" id="GO:0019083">
    <property type="term" value="P:viral transcription"/>
    <property type="evidence" value="ECO:0007669"/>
    <property type="project" value="UniProtKB-KW"/>
</dbReference>
<dbReference type="Gene3D" id="6.10.140.720">
    <property type="match status" value="1"/>
</dbReference>
<dbReference type="HAMAP" id="MF_04065">
    <property type="entry name" value="INFV_RDRP"/>
    <property type="match status" value="1"/>
</dbReference>
<dbReference type="InterPro" id="IPR007099">
    <property type="entry name" value="RNA-dir_pol_NSvirus"/>
</dbReference>
<dbReference type="InterPro" id="IPR001407">
    <property type="entry name" value="RNA_pol_PB1_influenza"/>
</dbReference>
<dbReference type="Pfam" id="PF00602">
    <property type="entry name" value="Flu_PB1"/>
    <property type="match status" value="1"/>
</dbReference>
<dbReference type="PIRSF" id="PIRSF000827">
    <property type="entry name" value="RdRPol_OMV"/>
    <property type="match status" value="1"/>
</dbReference>
<dbReference type="PROSITE" id="PS50525">
    <property type="entry name" value="RDRP_SSRNA_NEG_SEG"/>
    <property type="match status" value="1"/>
</dbReference>
<keyword id="KW-0002">3D-structure</keyword>
<keyword id="KW-1262">Eukaryotic host gene expression shutoff by virus</keyword>
<keyword id="KW-1191">Eukaryotic host transcription shutoff by virus</keyword>
<keyword id="KW-1035">Host cytoplasm</keyword>
<keyword id="KW-1190">Host gene expression shutoff by virus</keyword>
<keyword id="KW-1048">Host nucleus</keyword>
<keyword id="KW-0945">Host-virus interaction</keyword>
<keyword id="KW-1104">Inhibition of host RNA polymerase II by virus</keyword>
<keyword id="KW-0547">Nucleotide-binding</keyword>
<keyword id="KW-0548">Nucleotidyltransferase</keyword>
<keyword id="KW-0597">Phosphoprotein</keyword>
<keyword id="KW-0696">RNA-directed RNA polymerase</keyword>
<keyword id="KW-0808">Transferase</keyword>
<keyword id="KW-0693">Viral RNA replication</keyword>
<keyword id="KW-1195">Viral transcription</keyword>
<sequence length="757" mass="86413">MDVNPTLLFLKVPAQNAISTTFPYTGDPPYSHGTGTGYTMDTVNRTHQYSEKGKWTTNTETGAPQLNPIDGPLPEDNEPSGYAQTDCVLEAMAFLEESHPGIFENSCLETMEVVQQTRVDRLTQGRQTYDWTLNRNQPAATALANTIEVFRSNGLTANESGRLIDFLKDVMESMDKEEMEITTHFQRKRRVRDNMTKKMVTQRTIGKKKQRVNKRSYLIRALTLNTMTKDAERGKLKRRAIATPGMQIRGFVYFVETLARSICEKLEQSGLPVGGNEKKAKLANVVRKMMTNSQDTELSFTITGDNTKWNENQNPRMFLAMITYITKNQPEWFRNVLSIAPIMFSNKMARLGKGYMFESKSMKLRTQIPAEMLASIDLKYFNESTRKKIEKIRPLLIDGTASLSPGMMMGMFNMLSTVLGVSILNLGQKRYTKTTYWWDGLQSSDDFALIVNAPNHEGIQAGVDRFYRTCKLVGINMSKKKSYINRTGTFEFTSFFYRYGFVANFSMELPSFGVSGINESADMSIGVTVIKNNMINNDLGPATAQMALQLFIKDYRYTYRCHRGDTQIQTRRSFELEKLWEQTRSKAGLLVSDGGPNLYNIRNLHIPEVCLKWELMDEDYQGRLCNPLNPFVSHKEIESVNNAVVMPAHGPAKSMEYDAVATTHSWIPKRNRSILNTSQRGILEDEQMYQKCCNLFEKFFPSSSYRRPVGISSMVEAMVSRARIDARIDFESGRIKKEEFAEIMKICSTIEELRRQK</sequence>
<reference key="1">
    <citation type="journal article" date="1982" name="Nucleic Acids Res.">
        <title>The complete sequence of RNA segment 2 of influenza A/NT/60/68 P1 protein.</title>
        <authorList>
            <person name="Bishop D.H.L."/>
            <person name="Huddleston J.A."/>
            <person name="Brownlee G.G."/>
        </authorList>
    </citation>
    <scope>NUCLEOTIDE SEQUENCE [GENOMIC RNA]</scope>
</reference>
<feature type="chain" id="PRO_0000078762" description="RNA-directed RNA polymerase catalytic subunit">
    <location>
        <begin position="1"/>
        <end position="757"/>
    </location>
</feature>
<feature type="domain" description="RdRp catalytic" evidence="1">
    <location>
        <begin position="286"/>
        <end position="483"/>
    </location>
</feature>
<feature type="region of interest" description="Disordered" evidence="2">
    <location>
        <begin position="50"/>
        <end position="82"/>
    </location>
</feature>
<feature type="region of interest" description="Promoter-binding site" evidence="1">
    <location>
        <begin position="249"/>
        <end position="256"/>
    </location>
</feature>
<feature type="short sequence motif" description="Nuclear localization signal" evidence="1">
    <location>
        <begin position="187"/>
        <end position="195"/>
    </location>
</feature>
<feature type="short sequence motif" description="Nuclear localization signal" evidence="1">
    <location>
        <begin position="203"/>
        <end position="216"/>
    </location>
</feature>
<feature type="compositionally biased region" description="Polar residues" evidence="2">
    <location>
        <begin position="55"/>
        <end position="64"/>
    </location>
</feature>
<feature type="sequence conflict" description="In Ref. 1; AAA43579." ref="1">
    <original>A</original>
    <variation>T</variation>
    <location>
        <position position="142"/>
    </location>
</feature>
<feature type="sequence conflict" description="In Ref. 1; AAA43579." ref="1">
    <original>V</original>
    <variation>I</variation>
    <location>
        <position position="632"/>
    </location>
</feature>
<feature type="helix" evidence="4">
    <location>
        <begin position="5"/>
        <end position="10"/>
    </location>
</feature>
<feature type="helix" evidence="4">
    <location>
        <begin position="15"/>
        <end position="21"/>
    </location>
</feature>
<feature type="helix" evidence="4">
    <location>
        <begin position="36"/>
        <end position="48"/>
    </location>
</feature>
<feature type="turn" evidence="4">
    <location>
        <begin position="49"/>
        <end position="52"/>
    </location>
</feature>
<feature type="strand" evidence="4">
    <location>
        <begin position="53"/>
        <end position="57"/>
    </location>
</feature>
<feature type="turn" evidence="4">
    <location>
        <begin position="59"/>
        <end position="61"/>
    </location>
</feature>
<feature type="strand" evidence="4">
    <location>
        <begin position="64"/>
        <end position="67"/>
    </location>
</feature>
<feature type="strand" evidence="4">
    <location>
        <begin position="76"/>
        <end position="78"/>
    </location>
</feature>
<feature type="helix" evidence="4">
    <location>
        <begin position="85"/>
        <end position="98"/>
    </location>
</feature>
<feature type="turn" evidence="3">
    <location>
        <begin position="99"/>
        <end position="101"/>
    </location>
</feature>
<feature type="helix" evidence="4">
    <location>
        <begin position="102"/>
        <end position="116"/>
    </location>
</feature>
<feature type="helix" evidence="4">
    <location>
        <begin position="119"/>
        <end position="122"/>
    </location>
</feature>
<feature type="strand" evidence="4">
    <location>
        <begin position="124"/>
        <end position="126"/>
    </location>
</feature>
<feature type="strand" evidence="3">
    <location>
        <begin position="128"/>
        <end position="130"/>
    </location>
</feature>
<feature type="turn" evidence="4">
    <location>
        <begin position="131"/>
        <end position="133"/>
    </location>
</feature>
<feature type="strand" evidence="4">
    <location>
        <begin position="134"/>
        <end position="137"/>
    </location>
</feature>
<feature type="helix" evidence="4">
    <location>
        <begin position="139"/>
        <end position="153"/>
    </location>
</feature>
<feature type="helix" evidence="4">
    <location>
        <begin position="157"/>
        <end position="160"/>
    </location>
</feature>
<feature type="helix" evidence="4">
    <location>
        <begin position="163"/>
        <end position="172"/>
    </location>
</feature>
<feature type="turn" evidence="4">
    <location>
        <begin position="173"/>
        <end position="175"/>
    </location>
</feature>
<feature type="strand" evidence="4">
    <location>
        <begin position="177"/>
        <end position="184"/>
    </location>
</feature>
<feature type="strand" evidence="4">
    <location>
        <begin position="207"/>
        <end position="213"/>
    </location>
</feature>
<feature type="helix" evidence="4">
    <location>
        <begin position="214"/>
        <end position="222"/>
    </location>
</feature>
<feature type="strand" evidence="4">
    <location>
        <begin position="225"/>
        <end position="228"/>
    </location>
</feature>
<feature type="strand" evidence="4">
    <location>
        <begin position="240"/>
        <end position="243"/>
    </location>
</feature>
<feature type="helix" evidence="4">
    <location>
        <begin position="249"/>
        <end position="264"/>
    </location>
</feature>
<feature type="helix" evidence="4">
    <location>
        <begin position="276"/>
        <end position="292"/>
    </location>
</feature>
<feature type="strand" evidence="4">
    <location>
        <begin position="295"/>
        <end position="304"/>
    </location>
</feature>
<feature type="strand" evidence="4">
    <location>
        <begin position="306"/>
        <end position="308"/>
    </location>
</feature>
<feature type="helix" evidence="4">
    <location>
        <begin position="309"/>
        <end position="312"/>
    </location>
</feature>
<feature type="helix" evidence="4">
    <location>
        <begin position="315"/>
        <end position="325"/>
    </location>
</feature>
<feature type="turn" evidence="4">
    <location>
        <begin position="326"/>
        <end position="328"/>
    </location>
</feature>
<feature type="helix" evidence="4">
    <location>
        <begin position="331"/>
        <end position="336"/>
    </location>
</feature>
<feature type="helix" evidence="4">
    <location>
        <begin position="339"/>
        <end position="343"/>
    </location>
</feature>
<feature type="strand" evidence="4">
    <location>
        <begin position="348"/>
        <end position="350"/>
    </location>
</feature>
<feature type="strand" evidence="4">
    <location>
        <begin position="355"/>
        <end position="359"/>
    </location>
</feature>
<feature type="turn" evidence="4">
    <location>
        <begin position="360"/>
        <end position="363"/>
    </location>
</feature>
<feature type="strand" evidence="4">
    <location>
        <begin position="364"/>
        <end position="368"/>
    </location>
</feature>
<feature type="helix" evidence="4">
    <location>
        <begin position="370"/>
        <end position="372"/>
    </location>
</feature>
<feature type="strand" evidence="3">
    <location>
        <begin position="378"/>
        <end position="381"/>
    </location>
</feature>
<feature type="helix" evidence="4">
    <location>
        <begin position="383"/>
        <end position="392"/>
    </location>
</feature>
<feature type="helix" evidence="4">
    <location>
        <begin position="393"/>
        <end position="395"/>
    </location>
</feature>
<feature type="strand" evidence="4">
    <location>
        <begin position="396"/>
        <end position="402"/>
    </location>
</feature>
<feature type="strand" evidence="4">
    <location>
        <begin position="409"/>
        <end position="412"/>
    </location>
</feature>
<feature type="helix" evidence="4">
    <location>
        <begin position="413"/>
        <end position="424"/>
    </location>
</feature>
<feature type="strand" evidence="4">
    <location>
        <begin position="428"/>
        <end position="432"/>
    </location>
</feature>
<feature type="strand" evidence="4">
    <location>
        <begin position="437"/>
        <end position="443"/>
    </location>
</feature>
<feature type="strand" evidence="4">
    <location>
        <begin position="446"/>
        <end position="455"/>
    </location>
</feature>
<feature type="helix" evidence="4">
    <location>
        <begin position="456"/>
        <end position="471"/>
    </location>
</feature>
<feature type="turn" evidence="4">
    <location>
        <begin position="472"/>
        <end position="474"/>
    </location>
</feature>
<feature type="strand" evidence="3">
    <location>
        <begin position="479"/>
        <end position="481"/>
    </location>
</feature>
<feature type="strand" evidence="4">
    <location>
        <begin position="483"/>
        <end position="486"/>
    </location>
</feature>
<feature type="strand" evidence="4">
    <location>
        <begin position="489"/>
        <end position="492"/>
    </location>
</feature>
<feature type="strand" evidence="4">
    <location>
        <begin position="495"/>
        <end position="501"/>
    </location>
</feature>
<feature type="helix" evidence="4">
    <location>
        <begin position="509"/>
        <end position="511"/>
    </location>
</feature>
<feature type="helix" evidence="4">
    <location>
        <begin position="519"/>
        <end position="535"/>
    </location>
</feature>
<feature type="helix" evidence="4">
    <location>
        <begin position="541"/>
        <end position="559"/>
    </location>
</feature>
<feature type="strand" evidence="4">
    <location>
        <begin position="564"/>
        <end position="566"/>
    </location>
</feature>
<feature type="turn" evidence="4">
    <location>
        <begin position="571"/>
        <end position="574"/>
    </location>
</feature>
<feature type="helix" evidence="4">
    <location>
        <begin position="575"/>
        <end position="582"/>
    </location>
</feature>
<feature type="helix" evidence="3">
    <location>
        <begin position="586"/>
        <end position="588"/>
    </location>
</feature>
<feature type="helix" evidence="4">
    <location>
        <begin position="591"/>
        <end position="593"/>
    </location>
</feature>
<feature type="helix" evidence="4">
    <location>
        <begin position="601"/>
        <end position="603"/>
    </location>
</feature>
<feature type="strand" evidence="3">
    <location>
        <begin position="604"/>
        <end position="606"/>
    </location>
</feature>
<feature type="turn" evidence="4">
    <location>
        <begin position="608"/>
        <end position="612"/>
    </location>
</feature>
<feature type="strand" evidence="4">
    <location>
        <begin position="613"/>
        <end position="616"/>
    </location>
</feature>
<feature type="helix" evidence="4">
    <location>
        <begin position="618"/>
        <end position="624"/>
    </location>
</feature>
<feature type="helix" evidence="4">
    <location>
        <begin position="637"/>
        <end position="639"/>
    </location>
</feature>
<feature type="strand" evidence="4">
    <location>
        <begin position="640"/>
        <end position="645"/>
    </location>
</feature>
<feature type="strand" evidence="4">
    <location>
        <begin position="648"/>
        <end position="650"/>
    </location>
</feature>
<feature type="strand" evidence="4">
    <location>
        <begin position="653"/>
        <end position="656"/>
    </location>
</feature>
<feature type="helix" evidence="4">
    <location>
        <begin position="674"/>
        <end position="676"/>
    </location>
</feature>
<feature type="helix" evidence="4">
    <location>
        <begin position="681"/>
        <end position="699"/>
    </location>
</feature>
<feature type="helix" evidence="4">
    <location>
        <begin position="701"/>
        <end position="704"/>
    </location>
</feature>
<feature type="strand" evidence="4">
    <location>
        <begin position="711"/>
        <end position="713"/>
    </location>
</feature>
<feature type="helix" evidence="4">
    <location>
        <begin position="714"/>
        <end position="731"/>
    </location>
</feature>
<feature type="strand" evidence="4">
    <location>
        <begin position="732"/>
        <end position="734"/>
    </location>
</feature>
<feature type="helix" evidence="4">
    <location>
        <begin position="737"/>
        <end position="754"/>
    </location>
</feature>